<dbReference type="EMBL" id="AE000520">
    <property type="protein sequence ID" value="AAC65823.1"/>
    <property type="molecule type" value="Genomic_DNA"/>
</dbReference>
<dbReference type="PIR" id="G71274">
    <property type="entry name" value="G71274"/>
</dbReference>
<dbReference type="RefSeq" id="WP_010882299.1">
    <property type="nucleotide sequence ID" value="NC_021490.2"/>
</dbReference>
<dbReference type="STRING" id="243276.TP_0855"/>
<dbReference type="EnsemblBacteria" id="AAC65823">
    <property type="protein sequence ID" value="AAC65823"/>
    <property type="gene ID" value="TP_0855"/>
</dbReference>
<dbReference type="KEGG" id="tpa:TP_0855"/>
<dbReference type="KEGG" id="tpw:TPANIC_0855"/>
<dbReference type="eggNOG" id="ENOG5033Q9N">
    <property type="taxonomic scope" value="Bacteria"/>
</dbReference>
<dbReference type="HOGENOM" id="CLU_011448_0_0_12"/>
<dbReference type="OrthoDB" id="353373at2"/>
<dbReference type="Proteomes" id="UP000000811">
    <property type="component" value="Chromosome"/>
</dbReference>
<keyword id="KW-0175">Coiled coil</keyword>
<keyword id="KW-1185">Reference proteome</keyword>
<keyword id="KW-0732">Signal</keyword>
<reference key="1">
    <citation type="journal article" date="1998" name="Science">
        <title>Complete genome sequence of Treponema pallidum, the syphilis spirochete.</title>
        <authorList>
            <person name="Fraser C.M."/>
            <person name="Norris S.J."/>
            <person name="Weinstock G.M."/>
            <person name="White O."/>
            <person name="Sutton G.G."/>
            <person name="Dodson R.J."/>
            <person name="Gwinn M.L."/>
            <person name="Hickey E.K."/>
            <person name="Clayton R.A."/>
            <person name="Ketchum K.A."/>
            <person name="Sodergren E."/>
            <person name="Hardham J.M."/>
            <person name="McLeod M.P."/>
            <person name="Salzberg S.L."/>
            <person name="Peterson J.D."/>
            <person name="Khalak H.G."/>
            <person name="Richardson D.L."/>
            <person name="Howell J.K."/>
            <person name="Chidambaram M."/>
            <person name="Utterback T.R."/>
            <person name="McDonald L.A."/>
            <person name="Artiach P."/>
            <person name="Bowman C."/>
            <person name="Cotton M.D."/>
            <person name="Fujii C."/>
            <person name="Garland S.A."/>
            <person name="Hatch B."/>
            <person name="Horst K."/>
            <person name="Roberts K.M."/>
            <person name="Sandusky M."/>
            <person name="Weidman J.F."/>
            <person name="Smith H.O."/>
            <person name="Venter J.C."/>
        </authorList>
    </citation>
    <scope>NUCLEOTIDE SEQUENCE [LARGE SCALE GENOMIC DNA]</scope>
    <source>
        <strain>Nichols</strain>
    </source>
</reference>
<name>Y855_TREPA</name>
<sequence>MRIHQRSAPCVPVLLFLFLPSAPLCARGSKDWTPPQLGEVIESTEQDLAEFDAGLFRADRILDRHDLYRKTMHQLFSTLLEEPKNHAKHLQLIETLEKLAGPESKEIHEFLNRLRNSSTYAVYAARFFHLMERARILMARQEYLKAALLYRSGYELYYDEYLADPSSPGKKEVRARVEHAHAHVSRAKPLLEAVAAARAQYQNTQKRTYAASAHEAARARDAYSAAPAAPAAPGARAPSAAYPHSLTVEAELRILQDFSKTTEESAALTSLVQALGALLKFSRDIEHTGVVFEQLSTRAQKNNETQEAFLAVARKITLGRSKLEFEGILGALQAPAFDAFVDLFEAGRAHVAALHDQARAQFTFAHPPHSGRNIPAPTDTALASAGAWAAVGAGPAGSLIPGAPLSAGVGSRGAWGALPAPVEPLLRQADDALGALARLWAACAPLGAQHGRFPRDYETFGAQIVALSAHADALRATKHAYDFYHALLAFQRAPTVPVSAALRRQDLSQNEAFARDLSELAHHQEFLRRALAETESLSPPADTASTPSPGGAGDTPVPSQADKGGAKQSAAPDTAQKAVAQKAGASEEADASSSPSEMAVRAARAQLHAIQSELLRRFTALKRNRYTAHMAFHQHSGVSALAEYAQQLTSAEEALRFDAKDERRVRALSFVSETGPQQVSKDMEALDRLLSFFSGEEEFLSERGYAYGLQSLRDLRTQFEQFSARVQTLFLAAEQRAIHERLARQEAEYRYRQAVEGLGQDDFGGARKNLVLSREKADLALSLRYDTGYATETDTRLSTLDSSINRRENELVVKDVRAYIAQAKDKYYKGEVLDAERLLIRAKNRWAVTNVTENGEITNWLSVISTAVALKIGRVIPDFAPLYPQMSQLLHHAEQLYLHAAYLNASQRQEMERLLATSRENIHKVLLVYPLNERAGQLSLRIDQLLDPRSFRQQFAKKLDTIRGTYKTESKKAYSLLLDLYAIDARFSGIEKLKQEVEIYLGVRLPPPNPQAIAQSSNFTLAARRIFERRDAALYQVAIQQLDEALKLNPDNDAAAQLKDRIQSLTGDGAVNVLSSEDEKEYQRALQELQKGNKLVASAVVEQLLQKDRNKKSAKIQQLKKRIDAQL</sequence>
<protein>
    <recommendedName>
        <fullName>Uncharacterized protein TP_0855</fullName>
    </recommendedName>
</protein>
<organism>
    <name type="scientific">Treponema pallidum (strain Nichols)</name>
    <dbReference type="NCBI Taxonomy" id="243276"/>
    <lineage>
        <taxon>Bacteria</taxon>
        <taxon>Pseudomonadati</taxon>
        <taxon>Spirochaetota</taxon>
        <taxon>Spirochaetia</taxon>
        <taxon>Spirochaetales</taxon>
        <taxon>Treponemataceae</taxon>
        <taxon>Treponema</taxon>
    </lineage>
</organism>
<feature type="signal peptide" evidence="1">
    <location>
        <begin position="1"/>
        <end position="26"/>
    </location>
</feature>
<feature type="chain" id="PRO_0000014265" description="Uncharacterized protein TP_0855">
    <location>
        <begin position="27"/>
        <end position="1127"/>
    </location>
</feature>
<feature type="region of interest" description="Disordered" evidence="2">
    <location>
        <begin position="533"/>
        <end position="600"/>
    </location>
</feature>
<feature type="coiled-coil region" evidence="1">
    <location>
        <begin position="1076"/>
        <end position="1126"/>
    </location>
</feature>
<feature type="compositionally biased region" description="Low complexity" evidence="2">
    <location>
        <begin position="536"/>
        <end position="549"/>
    </location>
</feature>
<feature type="compositionally biased region" description="Low complexity" evidence="2">
    <location>
        <begin position="583"/>
        <end position="599"/>
    </location>
</feature>
<evidence type="ECO:0000255" key="1"/>
<evidence type="ECO:0000256" key="2">
    <source>
        <dbReference type="SAM" id="MobiDB-lite"/>
    </source>
</evidence>
<gene>
    <name type="ordered locus">TP_0855</name>
</gene>
<proteinExistence type="inferred from homology"/>
<accession>O83827</accession>